<sequence length="467" mass="52551">MSLSLWQQCLARLQDELPATEFSMWIRPLQAELSDNTLALYAPNRFVLDWVRDKYLNNINGLLTSFCGADAPQLRFEVGTKPVTQTPQAAVTSNVAAPAQVAQTQPQRAAPSTRSGWDNVPAPAEPTYRSNVNVKHTFDNFVEGKSNQLARAAARQVADNPGGAYNPLFLYGGTGLGKTHLLHAVGNGIMARKPNAKVVYMHSERFVQDMVKALQNNAIEEFKRYYRSVDALLIDDIQFFANKERSQEEFFHTFNALLEGNQQIILTSDRYPKEINGVEDRLKSRFGWGLTVAIEPPELETRVAILMKKADENDIRLPGEVAFFIAKRLRSNVRELEGALNRVIANANFTGRAITIDFVREALRDLLALQEKLVTIDNIQKTVAEYYKIKVADLLSKRRSRSVARPRQMAMALAKELTNHSLPEIGDAFGGRDHTTVLHACRKIEQLREESHDIKEDFSNLIRTLSS</sequence>
<dbReference type="EMBL" id="CP001396">
    <property type="protein sequence ID" value="ACR62147.1"/>
    <property type="molecule type" value="Genomic_DNA"/>
</dbReference>
<dbReference type="RefSeq" id="WP_000059111.1">
    <property type="nucleotide sequence ID" value="NC_012759.1"/>
</dbReference>
<dbReference type="SMR" id="C4ZYX9"/>
<dbReference type="GeneID" id="93778443"/>
<dbReference type="KEGG" id="ebw:BWG_3392"/>
<dbReference type="HOGENOM" id="CLU_026910_0_1_6"/>
<dbReference type="GO" id="GO:0005737">
    <property type="term" value="C:cytoplasm"/>
    <property type="evidence" value="ECO:0007669"/>
    <property type="project" value="UniProtKB-SubCell"/>
</dbReference>
<dbReference type="GO" id="GO:0005886">
    <property type="term" value="C:plasma membrane"/>
    <property type="evidence" value="ECO:0007669"/>
    <property type="project" value="TreeGrafter"/>
</dbReference>
<dbReference type="GO" id="GO:0005524">
    <property type="term" value="F:ATP binding"/>
    <property type="evidence" value="ECO:0007669"/>
    <property type="project" value="UniProtKB-UniRule"/>
</dbReference>
<dbReference type="GO" id="GO:0016887">
    <property type="term" value="F:ATP hydrolysis activity"/>
    <property type="evidence" value="ECO:0007669"/>
    <property type="project" value="InterPro"/>
</dbReference>
<dbReference type="GO" id="GO:0003688">
    <property type="term" value="F:DNA replication origin binding"/>
    <property type="evidence" value="ECO:0007669"/>
    <property type="project" value="UniProtKB-UniRule"/>
</dbReference>
<dbReference type="GO" id="GO:0008289">
    <property type="term" value="F:lipid binding"/>
    <property type="evidence" value="ECO:0007669"/>
    <property type="project" value="UniProtKB-KW"/>
</dbReference>
<dbReference type="GO" id="GO:0006270">
    <property type="term" value="P:DNA replication initiation"/>
    <property type="evidence" value="ECO:0007669"/>
    <property type="project" value="UniProtKB-UniRule"/>
</dbReference>
<dbReference type="GO" id="GO:0006275">
    <property type="term" value="P:regulation of DNA replication"/>
    <property type="evidence" value="ECO:0007669"/>
    <property type="project" value="UniProtKB-UniRule"/>
</dbReference>
<dbReference type="CDD" id="cd00009">
    <property type="entry name" value="AAA"/>
    <property type="match status" value="1"/>
</dbReference>
<dbReference type="CDD" id="cd06571">
    <property type="entry name" value="Bac_DnaA_C"/>
    <property type="match status" value="1"/>
</dbReference>
<dbReference type="FunFam" id="1.10.1750.10:FF:000001">
    <property type="entry name" value="Chromosomal replication initiator protein DnaA"/>
    <property type="match status" value="1"/>
</dbReference>
<dbReference type="FunFam" id="1.10.8.60:FF:000003">
    <property type="entry name" value="Chromosomal replication initiator protein DnaA"/>
    <property type="match status" value="1"/>
</dbReference>
<dbReference type="FunFam" id="3.30.300.180:FF:000001">
    <property type="entry name" value="Chromosomal replication initiator protein DnaA"/>
    <property type="match status" value="1"/>
</dbReference>
<dbReference type="FunFam" id="3.40.50.300:FF:000103">
    <property type="entry name" value="Chromosomal replication initiator protein DnaA"/>
    <property type="match status" value="1"/>
</dbReference>
<dbReference type="Gene3D" id="1.10.1750.10">
    <property type="match status" value="1"/>
</dbReference>
<dbReference type="Gene3D" id="1.10.8.60">
    <property type="match status" value="1"/>
</dbReference>
<dbReference type="Gene3D" id="3.30.300.180">
    <property type="match status" value="1"/>
</dbReference>
<dbReference type="Gene3D" id="3.40.50.300">
    <property type="entry name" value="P-loop containing nucleotide triphosphate hydrolases"/>
    <property type="match status" value="1"/>
</dbReference>
<dbReference type="HAMAP" id="MF_00377">
    <property type="entry name" value="DnaA_bact"/>
    <property type="match status" value="1"/>
</dbReference>
<dbReference type="InterPro" id="IPR003593">
    <property type="entry name" value="AAA+_ATPase"/>
</dbReference>
<dbReference type="InterPro" id="IPR001957">
    <property type="entry name" value="Chromosome_initiator_DnaA"/>
</dbReference>
<dbReference type="InterPro" id="IPR020591">
    <property type="entry name" value="Chromosome_initiator_DnaA-like"/>
</dbReference>
<dbReference type="InterPro" id="IPR018312">
    <property type="entry name" value="Chromosome_initiator_DnaA_CS"/>
</dbReference>
<dbReference type="InterPro" id="IPR013159">
    <property type="entry name" value="DnaA_C"/>
</dbReference>
<dbReference type="InterPro" id="IPR013317">
    <property type="entry name" value="DnaA_dom"/>
</dbReference>
<dbReference type="InterPro" id="IPR024633">
    <property type="entry name" value="DnaA_N_dom"/>
</dbReference>
<dbReference type="InterPro" id="IPR038454">
    <property type="entry name" value="DnaA_N_sf"/>
</dbReference>
<dbReference type="InterPro" id="IPR027417">
    <property type="entry name" value="P-loop_NTPase"/>
</dbReference>
<dbReference type="InterPro" id="IPR010921">
    <property type="entry name" value="Trp_repressor/repl_initiator"/>
</dbReference>
<dbReference type="NCBIfam" id="TIGR00362">
    <property type="entry name" value="DnaA"/>
    <property type="match status" value="1"/>
</dbReference>
<dbReference type="PANTHER" id="PTHR30050">
    <property type="entry name" value="CHROMOSOMAL REPLICATION INITIATOR PROTEIN DNAA"/>
    <property type="match status" value="1"/>
</dbReference>
<dbReference type="PANTHER" id="PTHR30050:SF2">
    <property type="entry name" value="CHROMOSOMAL REPLICATION INITIATOR PROTEIN DNAA"/>
    <property type="match status" value="1"/>
</dbReference>
<dbReference type="Pfam" id="PF00308">
    <property type="entry name" value="Bac_DnaA"/>
    <property type="match status" value="1"/>
</dbReference>
<dbReference type="Pfam" id="PF08299">
    <property type="entry name" value="Bac_DnaA_C"/>
    <property type="match status" value="1"/>
</dbReference>
<dbReference type="Pfam" id="PF11638">
    <property type="entry name" value="DnaA_N"/>
    <property type="match status" value="1"/>
</dbReference>
<dbReference type="PRINTS" id="PR00051">
    <property type="entry name" value="DNAA"/>
</dbReference>
<dbReference type="SMART" id="SM00382">
    <property type="entry name" value="AAA"/>
    <property type="match status" value="1"/>
</dbReference>
<dbReference type="SMART" id="SM00760">
    <property type="entry name" value="Bac_DnaA_C"/>
    <property type="match status" value="1"/>
</dbReference>
<dbReference type="SUPFAM" id="SSF52540">
    <property type="entry name" value="P-loop containing nucleoside triphosphate hydrolases"/>
    <property type="match status" value="1"/>
</dbReference>
<dbReference type="SUPFAM" id="SSF48295">
    <property type="entry name" value="TrpR-like"/>
    <property type="match status" value="1"/>
</dbReference>
<dbReference type="PROSITE" id="PS01008">
    <property type="entry name" value="DNAA"/>
    <property type="match status" value="1"/>
</dbReference>
<evidence type="ECO:0000255" key="1">
    <source>
        <dbReference type="HAMAP-Rule" id="MF_00377"/>
    </source>
</evidence>
<evidence type="ECO:0000256" key="2">
    <source>
        <dbReference type="SAM" id="MobiDB-lite"/>
    </source>
</evidence>
<accession>C4ZYX9</accession>
<proteinExistence type="inferred from homology"/>
<name>DNAA_ECOBW</name>
<organism>
    <name type="scientific">Escherichia coli (strain K12 / MC4100 / BW2952)</name>
    <dbReference type="NCBI Taxonomy" id="595496"/>
    <lineage>
        <taxon>Bacteria</taxon>
        <taxon>Pseudomonadati</taxon>
        <taxon>Pseudomonadota</taxon>
        <taxon>Gammaproteobacteria</taxon>
        <taxon>Enterobacterales</taxon>
        <taxon>Enterobacteriaceae</taxon>
        <taxon>Escherichia</taxon>
    </lineage>
</organism>
<gene>
    <name evidence="1" type="primary">dnaA</name>
    <name type="ordered locus">BWG_3392</name>
</gene>
<reference key="1">
    <citation type="journal article" date="2009" name="J. Bacteriol.">
        <title>Genomic sequencing reveals regulatory mutations and recombinational events in the widely used MC4100 lineage of Escherichia coli K-12.</title>
        <authorList>
            <person name="Ferenci T."/>
            <person name="Zhou Z."/>
            <person name="Betteridge T."/>
            <person name="Ren Y."/>
            <person name="Liu Y."/>
            <person name="Feng L."/>
            <person name="Reeves P.R."/>
            <person name="Wang L."/>
        </authorList>
    </citation>
    <scope>NUCLEOTIDE SEQUENCE [LARGE SCALE GENOMIC DNA]</scope>
    <source>
        <strain>K12 / MC4100 / BW2952</strain>
    </source>
</reference>
<keyword id="KW-0067">ATP-binding</keyword>
<keyword id="KW-0963">Cytoplasm</keyword>
<keyword id="KW-0235">DNA replication</keyword>
<keyword id="KW-0238">DNA-binding</keyword>
<keyword id="KW-0446">Lipid-binding</keyword>
<keyword id="KW-0547">Nucleotide-binding</keyword>
<comment type="function">
    <text evidence="1">Plays an essential role in the initiation and regulation of chromosomal replication. ATP-DnaA binds to the origin of replication (oriC) to initiate formation of the DNA replication initiation complex once per cell cycle. Binds the DnaA box (a 9 base pair repeat at the origin) and separates the double-stranded (ds)DNA. Forms a right-handed helical filament on oriC DNA; dsDNA binds to the exterior of the filament while single-stranded (ss)DNA is stabiized in the filament's interior. The ATP-DnaA-oriC complex binds and stabilizes one strand of the AT-rich DNA unwinding element (DUE), permitting loading of DNA polymerase. After initiation quickly degrades to an ADP-DnaA complex that is not apt for DNA replication. Binds acidic phospholipids.</text>
</comment>
<comment type="subunit">
    <text evidence="1">Oligomerizes as a right-handed, spiral filament on DNA at oriC.</text>
</comment>
<comment type="subcellular location">
    <subcellularLocation>
        <location evidence="1">Cytoplasm</location>
    </subcellularLocation>
</comment>
<comment type="domain">
    <text evidence="1">Domain I is involved in oligomerization and binding regulators, domain II is flexibile and of varying length in different bacteria, domain III forms the AAA+ region, while domain IV binds dsDNA.</text>
</comment>
<comment type="similarity">
    <text evidence="1">Belongs to the DnaA family.</text>
</comment>
<protein>
    <recommendedName>
        <fullName evidence="1">Chromosomal replication initiator protein DnaA</fullName>
    </recommendedName>
</protein>
<feature type="chain" id="PRO_1000205650" description="Chromosomal replication initiator protein DnaA">
    <location>
        <begin position="1"/>
        <end position="467"/>
    </location>
</feature>
<feature type="region of interest" description="Domain I, interacts with DnaA modulators" evidence="1">
    <location>
        <begin position="1"/>
        <end position="90"/>
    </location>
</feature>
<feature type="region of interest" description="Domain II" evidence="1">
    <location>
        <begin position="91"/>
        <end position="130"/>
    </location>
</feature>
<feature type="region of interest" description="Disordered" evidence="2">
    <location>
        <begin position="98"/>
        <end position="119"/>
    </location>
</feature>
<feature type="region of interest" description="Domain III, AAA+ region" evidence="1">
    <location>
        <begin position="131"/>
        <end position="347"/>
    </location>
</feature>
<feature type="region of interest" description="Domain IV, binds dsDNA" evidence="1">
    <location>
        <begin position="348"/>
        <end position="467"/>
    </location>
</feature>
<feature type="compositionally biased region" description="Low complexity" evidence="2">
    <location>
        <begin position="98"/>
        <end position="111"/>
    </location>
</feature>
<feature type="binding site" evidence="1">
    <location>
        <position position="175"/>
    </location>
    <ligand>
        <name>ATP</name>
        <dbReference type="ChEBI" id="CHEBI:30616"/>
    </ligand>
</feature>
<feature type="binding site" evidence="1">
    <location>
        <position position="177"/>
    </location>
    <ligand>
        <name>ATP</name>
        <dbReference type="ChEBI" id="CHEBI:30616"/>
    </ligand>
</feature>
<feature type="binding site" evidence="1">
    <location>
        <position position="178"/>
    </location>
    <ligand>
        <name>ATP</name>
        <dbReference type="ChEBI" id="CHEBI:30616"/>
    </ligand>
</feature>
<feature type="binding site" evidence="1">
    <location>
        <position position="179"/>
    </location>
    <ligand>
        <name>ATP</name>
        <dbReference type="ChEBI" id="CHEBI:30616"/>
    </ligand>
</feature>